<keyword id="KW-0145">Chemotaxis</keyword>
<keyword id="KW-0963">Cytoplasm</keyword>
<keyword id="KW-0378">Hydrolase</keyword>
<keyword id="KW-0597">Phosphoprotein</keyword>
<keyword id="KW-1185">Reference proteome</keyword>
<sequence>MVVDDSAVVRQVLVGVLNEAPGIEVIATAADPLLAIEKMRQQWPDVIVLDVEMPRMDGITFLRKIMSERPTPVVICSTLTEKGARVTMDALAAGAVAVVTKPRLGLKQFLTDSADELVATVRSAARANVKRLAARVTAAPLEAEVKHTADVILPAQTGRALAQTTERIVAIGTSTGGTQALEEVLTALPRVCPGIVIVQHMPEKFTAAFAARLNGLCQIAVKEAANNDRVMPGRALIAPGGKHLLLRRSGAQYFVEVLEGPPVNRHRPSVDVLFRSAARAAGSNALGIIMTGMGDDGAAGLLEMRQAGARTIAQDEHTSIVFGMPKEAIKRGGADRILPLGAMAREIVTQLQ</sequence>
<dbReference type="EC" id="3.1.1.61" evidence="1"/>
<dbReference type="EC" id="3.5.1.44" evidence="1"/>
<dbReference type="EMBL" id="AE008922">
    <property type="protein sequence ID" value="AAM41977.1"/>
    <property type="molecule type" value="Genomic_DNA"/>
</dbReference>
<dbReference type="RefSeq" id="NP_638053.2">
    <property type="nucleotide sequence ID" value="NC_003902.1"/>
</dbReference>
<dbReference type="SMR" id="Q8P7A6"/>
<dbReference type="STRING" id="190485.XCC2705"/>
<dbReference type="EnsemblBacteria" id="AAM41977">
    <property type="protein sequence ID" value="AAM41977"/>
    <property type="gene ID" value="XCC2705"/>
</dbReference>
<dbReference type="KEGG" id="xcc:XCC2705"/>
<dbReference type="PATRIC" id="fig|190485.4.peg.2886"/>
<dbReference type="eggNOG" id="COG2201">
    <property type="taxonomic scope" value="Bacteria"/>
</dbReference>
<dbReference type="HOGENOM" id="CLU_000445_51_0_6"/>
<dbReference type="OrthoDB" id="9793421at2"/>
<dbReference type="Proteomes" id="UP000001010">
    <property type="component" value="Chromosome"/>
</dbReference>
<dbReference type="GO" id="GO:0005829">
    <property type="term" value="C:cytosol"/>
    <property type="evidence" value="ECO:0000318"/>
    <property type="project" value="GO_Central"/>
</dbReference>
<dbReference type="GO" id="GO:0032993">
    <property type="term" value="C:protein-DNA complex"/>
    <property type="evidence" value="ECO:0000318"/>
    <property type="project" value="GO_Central"/>
</dbReference>
<dbReference type="GO" id="GO:0000156">
    <property type="term" value="F:phosphorelay response regulator activity"/>
    <property type="evidence" value="ECO:0000318"/>
    <property type="project" value="GO_Central"/>
</dbReference>
<dbReference type="GO" id="GO:0008984">
    <property type="term" value="F:protein-glutamate methylesterase activity"/>
    <property type="evidence" value="ECO:0007669"/>
    <property type="project" value="UniProtKB-UniRule"/>
</dbReference>
<dbReference type="GO" id="GO:0050568">
    <property type="term" value="F:protein-glutamine glutaminase activity"/>
    <property type="evidence" value="ECO:0007669"/>
    <property type="project" value="UniProtKB-UniRule"/>
</dbReference>
<dbReference type="GO" id="GO:0000976">
    <property type="term" value="F:transcription cis-regulatory region binding"/>
    <property type="evidence" value="ECO:0000318"/>
    <property type="project" value="GO_Central"/>
</dbReference>
<dbReference type="GO" id="GO:0006935">
    <property type="term" value="P:chemotaxis"/>
    <property type="evidence" value="ECO:0007669"/>
    <property type="project" value="UniProtKB-UniRule"/>
</dbReference>
<dbReference type="GO" id="GO:0006355">
    <property type="term" value="P:regulation of DNA-templated transcription"/>
    <property type="evidence" value="ECO:0000318"/>
    <property type="project" value="GO_Central"/>
</dbReference>
<dbReference type="CDD" id="cd16432">
    <property type="entry name" value="CheB_Rec"/>
    <property type="match status" value="1"/>
</dbReference>
<dbReference type="CDD" id="cd17541">
    <property type="entry name" value="REC_CheB-like"/>
    <property type="match status" value="1"/>
</dbReference>
<dbReference type="Gene3D" id="3.40.50.2300">
    <property type="match status" value="1"/>
</dbReference>
<dbReference type="Gene3D" id="3.40.50.180">
    <property type="entry name" value="Methylesterase CheB, C-terminal domain"/>
    <property type="match status" value="1"/>
</dbReference>
<dbReference type="HAMAP" id="MF_00099">
    <property type="entry name" value="CheB_chemtxs"/>
    <property type="match status" value="1"/>
</dbReference>
<dbReference type="InterPro" id="IPR008248">
    <property type="entry name" value="CheB-like"/>
</dbReference>
<dbReference type="InterPro" id="IPR035909">
    <property type="entry name" value="CheB_C"/>
</dbReference>
<dbReference type="InterPro" id="IPR011006">
    <property type="entry name" value="CheY-like_superfamily"/>
</dbReference>
<dbReference type="InterPro" id="IPR000673">
    <property type="entry name" value="Sig_transdc_resp-reg_Me-estase"/>
</dbReference>
<dbReference type="InterPro" id="IPR001789">
    <property type="entry name" value="Sig_transdc_resp-reg_receiver"/>
</dbReference>
<dbReference type="NCBIfam" id="NF001965">
    <property type="entry name" value="PRK00742.1"/>
    <property type="match status" value="1"/>
</dbReference>
<dbReference type="NCBIfam" id="NF009206">
    <property type="entry name" value="PRK12555.1"/>
    <property type="match status" value="1"/>
</dbReference>
<dbReference type="PANTHER" id="PTHR42872">
    <property type="entry name" value="PROTEIN-GLUTAMATE METHYLESTERASE/PROTEIN-GLUTAMINE GLUTAMINASE"/>
    <property type="match status" value="1"/>
</dbReference>
<dbReference type="PANTHER" id="PTHR42872:SF6">
    <property type="entry name" value="PROTEIN-GLUTAMATE METHYLESTERASE_PROTEIN-GLUTAMINE GLUTAMINASE"/>
    <property type="match status" value="1"/>
</dbReference>
<dbReference type="Pfam" id="PF01339">
    <property type="entry name" value="CheB_methylest"/>
    <property type="match status" value="1"/>
</dbReference>
<dbReference type="Pfam" id="PF00072">
    <property type="entry name" value="Response_reg"/>
    <property type="match status" value="1"/>
</dbReference>
<dbReference type="PIRSF" id="PIRSF000876">
    <property type="entry name" value="RR_chemtxs_CheB"/>
    <property type="match status" value="1"/>
</dbReference>
<dbReference type="SMART" id="SM00448">
    <property type="entry name" value="REC"/>
    <property type="match status" value="1"/>
</dbReference>
<dbReference type="SUPFAM" id="SSF52172">
    <property type="entry name" value="CheY-like"/>
    <property type="match status" value="1"/>
</dbReference>
<dbReference type="SUPFAM" id="SSF52738">
    <property type="entry name" value="Methylesterase CheB, C-terminal domain"/>
    <property type="match status" value="1"/>
</dbReference>
<dbReference type="PROSITE" id="PS50122">
    <property type="entry name" value="CHEB"/>
    <property type="match status" value="1"/>
</dbReference>
<dbReference type="PROSITE" id="PS50110">
    <property type="entry name" value="RESPONSE_REGULATORY"/>
    <property type="match status" value="1"/>
</dbReference>
<reference key="1">
    <citation type="journal article" date="2002" name="Nature">
        <title>Comparison of the genomes of two Xanthomonas pathogens with differing host specificities.</title>
        <authorList>
            <person name="da Silva A.C.R."/>
            <person name="Ferro J.A."/>
            <person name="Reinach F.C."/>
            <person name="Farah C.S."/>
            <person name="Furlan L.R."/>
            <person name="Quaggio R.B."/>
            <person name="Monteiro-Vitorello C.B."/>
            <person name="Van Sluys M.A."/>
            <person name="Almeida N.F. Jr."/>
            <person name="Alves L.M.C."/>
            <person name="do Amaral A.M."/>
            <person name="Bertolini M.C."/>
            <person name="Camargo L.E.A."/>
            <person name="Camarotte G."/>
            <person name="Cannavan F."/>
            <person name="Cardozo J."/>
            <person name="Chambergo F."/>
            <person name="Ciapina L.P."/>
            <person name="Cicarelli R.M.B."/>
            <person name="Coutinho L.L."/>
            <person name="Cursino-Santos J.R."/>
            <person name="El-Dorry H."/>
            <person name="Faria J.B."/>
            <person name="Ferreira A.J.S."/>
            <person name="Ferreira R.C.C."/>
            <person name="Ferro M.I.T."/>
            <person name="Formighieri E.F."/>
            <person name="Franco M.C."/>
            <person name="Greggio C.C."/>
            <person name="Gruber A."/>
            <person name="Katsuyama A.M."/>
            <person name="Kishi L.T."/>
            <person name="Leite R.P."/>
            <person name="Lemos E.G.M."/>
            <person name="Lemos M.V.F."/>
            <person name="Locali E.C."/>
            <person name="Machado M.A."/>
            <person name="Madeira A.M.B.N."/>
            <person name="Martinez-Rossi N.M."/>
            <person name="Martins E.C."/>
            <person name="Meidanis J."/>
            <person name="Menck C.F.M."/>
            <person name="Miyaki C.Y."/>
            <person name="Moon D.H."/>
            <person name="Moreira L.M."/>
            <person name="Novo M.T.M."/>
            <person name="Okura V.K."/>
            <person name="Oliveira M.C."/>
            <person name="Oliveira V.R."/>
            <person name="Pereira H.A."/>
            <person name="Rossi A."/>
            <person name="Sena J.A.D."/>
            <person name="Silva C."/>
            <person name="de Souza R.F."/>
            <person name="Spinola L.A.F."/>
            <person name="Takita M.A."/>
            <person name="Tamura R.E."/>
            <person name="Teixeira E.C."/>
            <person name="Tezza R.I.D."/>
            <person name="Trindade dos Santos M."/>
            <person name="Truffi D."/>
            <person name="Tsai S.M."/>
            <person name="White F.F."/>
            <person name="Setubal J.C."/>
            <person name="Kitajima J.P."/>
        </authorList>
    </citation>
    <scope>NUCLEOTIDE SEQUENCE [LARGE SCALE GENOMIC DNA]</scope>
    <source>
        <strain>ATCC 33913 / DSM 3586 / NCPPB 528 / LMG 568 / P 25</strain>
    </source>
</reference>
<proteinExistence type="inferred from homology"/>
<evidence type="ECO:0000255" key="1">
    <source>
        <dbReference type="HAMAP-Rule" id="MF_00099"/>
    </source>
</evidence>
<comment type="function">
    <text evidence="1">Involved in chemotaxis. Part of a chemotaxis signal transduction system that modulates chemotaxis in response to various stimuli. Catalyzes the demethylation of specific methylglutamate residues introduced into the chemoreceptors (methyl-accepting chemotaxis proteins or MCP) by CheR. Also mediates the irreversible deamidation of specific glutamine residues to glutamic acid.</text>
</comment>
<comment type="catalytic activity">
    <reaction evidence="1">
        <text>[protein]-L-glutamate 5-O-methyl ester + H2O = L-glutamyl-[protein] + methanol + H(+)</text>
        <dbReference type="Rhea" id="RHEA:23236"/>
        <dbReference type="Rhea" id="RHEA-COMP:10208"/>
        <dbReference type="Rhea" id="RHEA-COMP:10311"/>
        <dbReference type="ChEBI" id="CHEBI:15377"/>
        <dbReference type="ChEBI" id="CHEBI:15378"/>
        <dbReference type="ChEBI" id="CHEBI:17790"/>
        <dbReference type="ChEBI" id="CHEBI:29973"/>
        <dbReference type="ChEBI" id="CHEBI:82795"/>
        <dbReference type="EC" id="3.1.1.61"/>
    </reaction>
</comment>
<comment type="catalytic activity">
    <reaction evidence="1">
        <text>L-glutaminyl-[protein] + H2O = L-glutamyl-[protein] + NH4(+)</text>
        <dbReference type="Rhea" id="RHEA:16441"/>
        <dbReference type="Rhea" id="RHEA-COMP:10207"/>
        <dbReference type="Rhea" id="RHEA-COMP:10208"/>
        <dbReference type="ChEBI" id="CHEBI:15377"/>
        <dbReference type="ChEBI" id="CHEBI:28938"/>
        <dbReference type="ChEBI" id="CHEBI:29973"/>
        <dbReference type="ChEBI" id="CHEBI:30011"/>
        <dbReference type="EC" id="3.5.1.44"/>
    </reaction>
</comment>
<comment type="subcellular location">
    <subcellularLocation>
        <location evidence="1">Cytoplasm</location>
    </subcellularLocation>
</comment>
<comment type="domain">
    <text evidence="1">Contains a C-terminal catalytic domain, and an N-terminal region which modulates catalytic activity.</text>
</comment>
<comment type="PTM">
    <text evidence="1">Phosphorylated by CheA. Phosphorylation of the N-terminal regulatory domain activates the methylesterase activity.</text>
</comment>
<comment type="similarity">
    <text evidence="1">Belongs to the CheB family.</text>
</comment>
<organism>
    <name type="scientific">Xanthomonas campestris pv. campestris (strain ATCC 33913 / DSM 3586 / NCPPB 528 / LMG 568 / P 25)</name>
    <dbReference type="NCBI Taxonomy" id="190485"/>
    <lineage>
        <taxon>Bacteria</taxon>
        <taxon>Pseudomonadati</taxon>
        <taxon>Pseudomonadota</taxon>
        <taxon>Gammaproteobacteria</taxon>
        <taxon>Lysobacterales</taxon>
        <taxon>Lysobacteraceae</taxon>
        <taxon>Xanthomonas</taxon>
    </lineage>
</organism>
<name>CHEB2_XANCP</name>
<accession>Q8P7A6</accession>
<feature type="chain" id="PRO_0000158046" description="Protein-glutamate methylesterase/protein-glutamine glutaminase 2">
    <location>
        <begin position="1"/>
        <end position="352"/>
    </location>
</feature>
<feature type="domain" description="Response regulatory" evidence="1">
    <location>
        <begin position="1"/>
        <end position="116"/>
    </location>
</feature>
<feature type="domain" description="CheB-type methylesterase" evidence="1">
    <location>
        <begin position="162"/>
        <end position="352"/>
    </location>
</feature>
<feature type="active site" evidence="1">
    <location>
        <position position="174"/>
    </location>
</feature>
<feature type="active site" evidence="1">
    <location>
        <position position="200"/>
    </location>
</feature>
<feature type="active site" evidence="1">
    <location>
        <position position="296"/>
    </location>
</feature>
<feature type="modified residue" description="4-aspartylphosphate" evidence="1">
    <location>
        <position position="50"/>
    </location>
</feature>
<gene>
    <name evidence="1" type="primary">cheB2</name>
    <name type="ordered locus">XCC2705</name>
</gene>
<protein>
    <recommendedName>
        <fullName evidence="1">Protein-glutamate methylesterase/protein-glutamine glutaminase 2</fullName>
        <ecNumber evidence="1">3.1.1.61</ecNumber>
        <ecNumber evidence="1">3.5.1.44</ecNumber>
    </recommendedName>
</protein>